<comment type="function">
    <text evidence="1">Binds 23S rRNA and is also seen to make contacts with the A and possibly P site tRNAs.</text>
</comment>
<comment type="subunit">
    <text evidence="1">Part of the 50S ribosomal subunit.</text>
</comment>
<comment type="similarity">
    <text evidence="1">Belongs to the universal ribosomal protein uL16 family.</text>
</comment>
<gene>
    <name evidence="1" type="primary">rplP</name>
    <name type="ordered locus">CLK_2917</name>
</gene>
<reference key="1">
    <citation type="journal article" date="2007" name="PLoS ONE">
        <title>Analysis of the neurotoxin complex genes in Clostridium botulinum A1-A4 and B1 strains: BoNT/A3, /Ba4 and /B1 clusters are located within plasmids.</title>
        <authorList>
            <person name="Smith T.J."/>
            <person name="Hill K.K."/>
            <person name="Foley B.T."/>
            <person name="Detter J.C."/>
            <person name="Munk A.C."/>
            <person name="Bruce D.C."/>
            <person name="Doggett N.A."/>
            <person name="Smith L.A."/>
            <person name="Marks J.D."/>
            <person name="Xie G."/>
            <person name="Brettin T.S."/>
        </authorList>
    </citation>
    <scope>NUCLEOTIDE SEQUENCE [LARGE SCALE GENOMIC DNA]</scope>
    <source>
        <strain>Loch Maree / Type A3</strain>
    </source>
</reference>
<dbReference type="EMBL" id="CP000962">
    <property type="protein sequence ID" value="ACA57003.1"/>
    <property type="molecule type" value="Genomic_DNA"/>
</dbReference>
<dbReference type="RefSeq" id="WP_003357619.1">
    <property type="nucleotide sequence ID" value="NC_010520.1"/>
</dbReference>
<dbReference type="SMR" id="B1KSL8"/>
<dbReference type="GeneID" id="92940243"/>
<dbReference type="KEGG" id="cbl:CLK_2917"/>
<dbReference type="HOGENOM" id="CLU_078858_2_1_9"/>
<dbReference type="GO" id="GO:0022625">
    <property type="term" value="C:cytosolic large ribosomal subunit"/>
    <property type="evidence" value="ECO:0007669"/>
    <property type="project" value="TreeGrafter"/>
</dbReference>
<dbReference type="GO" id="GO:0019843">
    <property type="term" value="F:rRNA binding"/>
    <property type="evidence" value="ECO:0007669"/>
    <property type="project" value="UniProtKB-UniRule"/>
</dbReference>
<dbReference type="GO" id="GO:0003735">
    <property type="term" value="F:structural constituent of ribosome"/>
    <property type="evidence" value="ECO:0007669"/>
    <property type="project" value="InterPro"/>
</dbReference>
<dbReference type="GO" id="GO:0000049">
    <property type="term" value="F:tRNA binding"/>
    <property type="evidence" value="ECO:0007669"/>
    <property type="project" value="UniProtKB-KW"/>
</dbReference>
<dbReference type="GO" id="GO:0006412">
    <property type="term" value="P:translation"/>
    <property type="evidence" value="ECO:0007669"/>
    <property type="project" value="UniProtKB-UniRule"/>
</dbReference>
<dbReference type="CDD" id="cd01433">
    <property type="entry name" value="Ribosomal_L16_L10e"/>
    <property type="match status" value="1"/>
</dbReference>
<dbReference type="FunFam" id="3.90.1170.10:FF:000001">
    <property type="entry name" value="50S ribosomal protein L16"/>
    <property type="match status" value="1"/>
</dbReference>
<dbReference type="Gene3D" id="3.90.1170.10">
    <property type="entry name" value="Ribosomal protein L10e/L16"/>
    <property type="match status" value="1"/>
</dbReference>
<dbReference type="HAMAP" id="MF_01342">
    <property type="entry name" value="Ribosomal_uL16"/>
    <property type="match status" value="1"/>
</dbReference>
<dbReference type="InterPro" id="IPR047873">
    <property type="entry name" value="Ribosomal_uL16"/>
</dbReference>
<dbReference type="InterPro" id="IPR000114">
    <property type="entry name" value="Ribosomal_uL16_bact-type"/>
</dbReference>
<dbReference type="InterPro" id="IPR020798">
    <property type="entry name" value="Ribosomal_uL16_CS"/>
</dbReference>
<dbReference type="InterPro" id="IPR016180">
    <property type="entry name" value="Ribosomal_uL16_dom"/>
</dbReference>
<dbReference type="InterPro" id="IPR036920">
    <property type="entry name" value="Ribosomal_uL16_sf"/>
</dbReference>
<dbReference type="NCBIfam" id="TIGR01164">
    <property type="entry name" value="rplP_bact"/>
    <property type="match status" value="1"/>
</dbReference>
<dbReference type="PANTHER" id="PTHR12220">
    <property type="entry name" value="50S/60S RIBOSOMAL PROTEIN L16"/>
    <property type="match status" value="1"/>
</dbReference>
<dbReference type="PANTHER" id="PTHR12220:SF13">
    <property type="entry name" value="LARGE RIBOSOMAL SUBUNIT PROTEIN UL16M"/>
    <property type="match status" value="1"/>
</dbReference>
<dbReference type="Pfam" id="PF00252">
    <property type="entry name" value="Ribosomal_L16"/>
    <property type="match status" value="1"/>
</dbReference>
<dbReference type="PRINTS" id="PR00060">
    <property type="entry name" value="RIBOSOMALL16"/>
</dbReference>
<dbReference type="SUPFAM" id="SSF54686">
    <property type="entry name" value="Ribosomal protein L16p/L10e"/>
    <property type="match status" value="1"/>
</dbReference>
<dbReference type="PROSITE" id="PS00586">
    <property type="entry name" value="RIBOSOMAL_L16_1"/>
    <property type="match status" value="1"/>
</dbReference>
<dbReference type="PROSITE" id="PS00701">
    <property type="entry name" value="RIBOSOMAL_L16_2"/>
    <property type="match status" value="1"/>
</dbReference>
<proteinExistence type="inferred from homology"/>
<protein>
    <recommendedName>
        <fullName evidence="1">Large ribosomal subunit protein uL16</fullName>
    </recommendedName>
    <alternativeName>
        <fullName evidence="2">50S ribosomal protein L16</fullName>
    </alternativeName>
</protein>
<sequence length="147" mass="16542">MLMPKRVKRRKVQRGRMKGKATRGNFIAYGDFGIQATECGWITSNQIEAARIAINRYVKRGGKVWIKIFPDKPVTEKPAETRMGSGKGSPEYWVAVVKPGRVLFEISGVSETVAREAMRLASHKLPVKTKFVTRRDFEEMGGEVNEG</sequence>
<evidence type="ECO:0000255" key="1">
    <source>
        <dbReference type="HAMAP-Rule" id="MF_01342"/>
    </source>
</evidence>
<evidence type="ECO:0000305" key="2"/>
<feature type="chain" id="PRO_1000142950" description="Large ribosomal subunit protein uL16">
    <location>
        <begin position="1"/>
        <end position="147"/>
    </location>
</feature>
<name>RL16_CLOBM</name>
<organism>
    <name type="scientific">Clostridium botulinum (strain Loch Maree / Type A3)</name>
    <dbReference type="NCBI Taxonomy" id="498214"/>
    <lineage>
        <taxon>Bacteria</taxon>
        <taxon>Bacillati</taxon>
        <taxon>Bacillota</taxon>
        <taxon>Clostridia</taxon>
        <taxon>Eubacteriales</taxon>
        <taxon>Clostridiaceae</taxon>
        <taxon>Clostridium</taxon>
    </lineage>
</organism>
<accession>B1KSL8</accession>
<keyword id="KW-0687">Ribonucleoprotein</keyword>
<keyword id="KW-0689">Ribosomal protein</keyword>
<keyword id="KW-0694">RNA-binding</keyword>
<keyword id="KW-0699">rRNA-binding</keyword>
<keyword id="KW-0820">tRNA-binding</keyword>